<comment type="function">
    <text evidence="1">Condensation of UDP-2,3-diacylglucosamine and 2,3-diacylglucosamine-1-phosphate to form lipid A disaccharide, a precursor of lipid A, a phosphorylated glycolipid that anchors the lipopolysaccharide to the outer membrane of the cell.</text>
</comment>
<comment type="catalytic activity">
    <reaction evidence="1">
        <text>2-N,3-O-bis[(3R)-3-hydroxytetradecanoyl]-alpha-D-glucosaminyl 1-phosphate + UDP-2-N,3-O-bis[(3R)-3-hydroxytetradecanoyl]-alpha-D-glucosamine = lipid A disaccharide (E. coli) + UDP + H(+)</text>
        <dbReference type="Rhea" id="RHEA:22668"/>
        <dbReference type="ChEBI" id="CHEBI:15378"/>
        <dbReference type="ChEBI" id="CHEBI:57957"/>
        <dbReference type="ChEBI" id="CHEBI:58223"/>
        <dbReference type="ChEBI" id="CHEBI:58466"/>
        <dbReference type="ChEBI" id="CHEBI:78847"/>
    </reaction>
</comment>
<comment type="catalytic activity">
    <reaction evidence="1">
        <text>a lipid X + a UDP-2-N,3-O-bis[(3R)-3-hydroxyacyl]-alpha-D-glucosamine = a lipid A disaccharide + UDP + H(+)</text>
        <dbReference type="Rhea" id="RHEA:67828"/>
        <dbReference type="ChEBI" id="CHEBI:15378"/>
        <dbReference type="ChEBI" id="CHEBI:58223"/>
        <dbReference type="ChEBI" id="CHEBI:137748"/>
        <dbReference type="ChEBI" id="CHEBI:176338"/>
        <dbReference type="ChEBI" id="CHEBI:176343"/>
        <dbReference type="EC" id="2.4.1.182"/>
    </reaction>
</comment>
<comment type="pathway">
    <text evidence="1">Glycolipid biosynthesis; lipid IV(A) biosynthesis; lipid IV(A) from (3R)-3-hydroxytetradecanoyl-[acyl-carrier-protein] and UDP-N-acetyl-alpha-D-glucosamine: step 5/6.</text>
</comment>
<comment type="similarity">
    <text evidence="1">Belongs to the LpxB family.</text>
</comment>
<accession>B7UJ83</accession>
<feature type="chain" id="PRO_1000191478" description="Lipid-A-disaccharide synthase">
    <location>
        <begin position="1"/>
        <end position="382"/>
    </location>
</feature>
<evidence type="ECO:0000255" key="1">
    <source>
        <dbReference type="HAMAP-Rule" id="MF_00392"/>
    </source>
</evidence>
<keyword id="KW-0328">Glycosyltransferase</keyword>
<keyword id="KW-0441">Lipid A biosynthesis</keyword>
<keyword id="KW-0444">Lipid biosynthesis</keyword>
<keyword id="KW-0443">Lipid metabolism</keyword>
<keyword id="KW-1185">Reference proteome</keyword>
<keyword id="KW-0808">Transferase</keyword>
<organism>
    <name type="scientific">Escherichia coli O127:H6 (strain E2348/69 / EPEC)</name>
    <dbReference type="NCBI Taxonomy" id="574521"/>
    <lineage>
        <taxon>Bacteria</taxon>
        <taxon>Pseudomonadati</taxon>
        <taxon>Pseudomonadota</taxon>
        <taxon>Gammaproteobacteria</taxon>
        <taxon>Enterobacterales</taxon>
        <taxon>Enterobacteriaceae</taxon>
        <taxon>Escherichia</taxon>
    </lineage>
</organism>
<reference key="1">
    <citation type="journal article" date="2009" name="J. Bacteriol.">
        <title>Complete genome sequence and comparative genome analysis of enteropathogenic Escherichia coli O127:H6 strain E2348/69.</title>
        <authorList>
            <person name="Iguchi A."/>
            <person name="Thomson N.R."/>
            <person name="Ogura Y."/>
            <person name="Saunders D."/>
            <person name="Ooka T."/>
            <person name="Henderson I.R."/>
            <person name="Harris D."/>
            <person name="Asadulghani M."/>
            <person name="Kurokawa K."/>
            <person name="Dean P."/>
            <person name="Kenny B."/>
            <person name="Quail M.A."/>
            <person name="Thurston S."/>
            <person name="Dougan G."/>
            <person name="Hayashi T."/>
            <person name="Parkhill J."/>
            <person name="Frankel G."/>
        </authorList>
    </citation>
    <scope>NUCLEOTIDE SEQUENCE [LARGE SCALE GENOMIC DNA]</scope>
    <source>
        <strain>E2348/69 / EPEC</strain>
    </source>
</reference>
<protein>
    <recommendedName>
        <fullName evidence="1">Lipid-A-disaccharide synthase</fullName>
        <ecNumber evidence="1">2.4.1.182</ecNumber>
    </recommendedName>
</protein>
<dbReference type="EC" id="2.4.1.182" evidence="1"/>
<dbReference type="EMBL" id="FM180568">
    <property type="protein sequence ID" value="CAS07735.1"/>
    <property type="molecule type" value="Genomic_DNA"/>
</dbReference>
<dbReference type="RefSeq" id="WP_000139674.1">
    <property type="nucleotide sequence ID" value="NC_011601.1"/>
</dbReference>
<dbReference type="SMR" id="B7UJ83"/>
<dbReference type="CAZy" id="GT19">
    <property type="family name" value="Glycosyltransferase Family 19"/>
</dbReference>
<dbReference type="KEGG" id="ecg:E2348C_0187"/>
<dbReference type="HOGENOM" id="CLU_036577_3_0_6"/>
<dbReference type="UniPathway" id="UPA00359">
    <property type="reaction ID" value="UER00481"/>
</dbReference>
<dbReference type="Proteomes" id="UP000008205">
    <property type="component" value="Chromosome"/>
</dbReference>
<dbReference type="GO" id="GO:0016020">
    <property type="term" value="C:membrane"/>
    <property type="evidence" value="ECO:0007669"/>
    <property type="project" value="GOC"/>
</dbReference>
<dbReference type="GO" id="GO:0008915">
    <property type="term" value="F:lipid-A-disaccharide synthase activity"/>
    <property type="evidence" value="ECO:0007669"/>
    <property type="project" value="UniProtKB-UniRule"/>
</dbReference>
<dbReference type="GO" id="GO:0005543">
    <property type="term" value="F:phospholipid binding"/>
    <property type="evidence" value="ECO:0007669"/>
    <property type="project" value="TreeGrafter"/>
</dbReference>
<dbReference type="GO" id="GO:0009245">
    <property type="term" value="P:lipid A biosynthetic process"/>
    <property type="evidence" value="ECO:0007669"/>
    <property type="project" value="UniProtKB-UniRule"/>
</dbReference>
<dbReference type="CDD" id="cd01635">
    <property type="entry name" value="Glycosyltransferase_GTB-type"/>
    <property type="match status" value="1"/>
</dbReference>
<dbReference type="HAMAP" id="MF_00392">
    <property type="entry name" value="LpxB"/>
    <property type="match status" value="1"/>
</dbReference>
<dbReference type="InterPro" id="IPR003835">
    <property type="entry name" value="Glyco_trans_19"/>
</dbReference>
<dbReference type="NCBIfam" id="TIGR00215">
    <property type="entry name" value="lpxB"/>
    <property type="match status" value="1"/>
</dbReference>
<dbReference type="PANTHER" id="PTHR30372">
    <property type="entry name" value="LIPID-A-DISACCHARIDE SYNTHASE"/>
    <property type="match status" value="1"/>
</dbReference>
<dbReference type="PANTHER" id="PTHR30372:SF4">
    <property type="entry name" value="LIPID-A-DISACCHARIDE SYNTHASE, MITOCHONDRIAL-RELATED"/>
    <property type="match status" value="1"/>
</dbReference>
<dbReference type="Pfam" id="PF02684">
    <property type="entry name" value="LpxB"/>
    <property type="match status" value="1"/>
</dbReference>
<dbReference type="SUPFAM" id="SSF53756">
    <property type="entry name" value="UDP-Glycosyltransferase/glycogen phosphorylase"/>
    <property type="match status" value="1"/>
</dbReference>
<sequence length="382" mass="42387">MTEQRPLTIALVAGETSGDILGAGLIRALKERVPNARFVGVAGPRMQAEGCEAWYEMEELAVMGIVEVLGRLRRLLHIRADLTKRFGELKPDVFVGIDAPDFNITLEGNLKKQGIKTIHYVSPSVWAWRQKRVFKIGRATDLVLAFLPFEKAFYDKYNVPCRFIGHTMADAMPLDPDKNGARDVLGIPHDAHCLALLPGSRGAEVEMLSADFLKTAQLLRQTYPDLEIVVPLVNAKRREQFERIKAEVAPDLSVHLLDGMGREAMVASDAALLASGTAALECMLAKCPMVVGYRMKPFTFWLAKRLVKTDYVSLPNLLAGRELVKELLQEECEPQKLAAALLPLLANGKTSHAMHDTFRELHQQIRCNADEQAAQAVLELAQ</sequence>
<proteinExistence type="inferred from homology"/>
<name>LPXB_ECO27</name>
<gene>
    <name evidence="1" type="primary">lpxB</name>
    <name type="ordered locus">E2348C_0187</name>
</gene>